<feature type="chain" id="PRO_0000231830" description="Pyridoxine 5'-phosphate synthase">
    <location>
        <begin position="1"/>
        <end position="245"/>
    </location>
</feature>
<feature type="active site" description="Proton acceptor" evidence="1">
    <location>
        <position position="43"/>
    </location>
</feature>
<feature type="active site" description="Proton acceptor" evidence="1">
    <location>
        <position position="70"/>
    </location>
</feature>
<feature type="active site" description="Proton donor" evidence="1">
    <location>
        <position position="190"/>
    </location>
</feature>
<feature type="binding site" evidence="1">
    <location>
        <position position="7"/>
    </location>
    <ligand>
        <name>3-amino-2-oxopropyl phosphate</name>
        <dbReference type="ChEBI" id="CHEBI:57279"/>
    </ligand>
</feature>
<feature type="binding site" evidence="1">
    <location>
        <begin position="9"/>
        <end position="10"/>
    </location>
    <ligand>
        <name>1-deoxy-D-xylulose 5-phosphate</name>
        <dbReference type="ChEBI" id="CHEBI:57792"/>
    </ligand>
</feature>
<feature type="binding site" evidence="1">
    <location>
        <position position="18"/>
    </location>
    <ligand>
        <name>3-amino-2-oxopropyl phosphate</name>
        <dbReference type="ChEBI" id="CHEBI:57279"/>
    </ligand>
</feature>
<feature type="binding site" evidence="1">
    <location>
        <position position="45"/>
    </location>
    <ligand>
        <name>1-deoxy-D-xylulose 5-phosphate</name>
        <dbReference type="ChEBI" id="CHEBI:57792"/>
    </ligand>
</feature>
<feature type="binding site" evidence="1">
    <location>
        <position position="50"/>
    </location>
    <ligand>
        <name>1-deoxy-D-xylulose 5-phosphate</name>
        <dbReference type="ChEBI" id="CHEBI:57792"/>
    </ligand>
</feature>
<feature type="binding site" evidence="1">
    <location>
        <position position="100"/>
    </location>
    <ligand>
        <name>1-deoxy-D-xylulose 5-phosphate</name>
        <dbReference type="ChEBI" id="CHEBI:57792"/>
    </ligand>
</feature>
<feature type="binding site" evidence="1">
    <location>
        <position position="191"/>
    </location>
    <ligand>
        <name>3-amino-2-oxopropyl phosphate</name>
        <dbReference type="ChEBI" id="CHEBI:57279"/>
    </ligand>
</feature>
<feature type="binding site" evidence="1">
    <location>
        <begin position="212"/>
        <end position="213"/>
    </location>
    <ligand>
        <name>3-amino-2-oxopropyl phosphate</name>
        <dbReference type="ChEBI" id="CHEBI:57279"/>
    </ligand>
</feature>
<feature type="site" description="Transition state stabilizer" evidence="1">
    <location>
        <position position="151"/>
    </location>
</feature>
<sequence length="245" mass="26648">MASLGVNIDHIANVRQARQTVEPDPVPMALLAELGGADGITVHLREDRRHIQDRDLDLLRATVRSRLNLEMAATAEMVGIALKIQPDMVTLVPERRQEVTTEGGLDVAAQQGSLKGMVDQLQVAGIPVSLFVDPVSQQLEAAFKSGARWVELHTGAYAEACWADQSFELARLTEATARARSLGLRVNAGHGLTYQNVEAVAAIEGIEELNIGHTIVARSIAVGLKEAVREMKRLVQNPRREPLFG</sequence>
<dbReference type="EC" id="2.6.99.2" evidence="1"/>
<dbReference type="EMBL" id="BX548175">
    <property type="protein sequence ID" value="CAE21266.1"/>
    <property type="molecule type" value="Genomic_DNA"/>
</dbReference>
<dbReference type="RefSeq" id="WP_011130463.1">
    <property type="nucleotide sequence ID" value="NC_005071.1"/>
</dbReference>
<dbReference type="SMR" id="Q7V6Q5"/>
<dbReference type="KEGG" id="pmt:PMT_1091"/>
<dbReference type="eggNOG" id="COG0854">
    <property type="taxonomic scope" value="Bacteria"/>
</dbReference>
<dbReference type="HOGENOM" id="CLU_074563_0_0_3"/>
<dbReference type="OrthoDB" id="9806590at2"/>
<dbReference type="UniPathway" id="UPA00244">
    <property type="reaction ID" value="UER00313"/>
</dbReference>
<dbReference type="Proteomes" id="UP000001423">
    <property type="component" value="Chromosome"/>
</dbReference>
<dbReference type="GO" id="GO:0005829">
    <property type="term" value="C:cytosol"/>
    <property type="evidence" value="ECO:0007669"/>
    <property type="project" value="TreeGrafter"/>
</dbReference>
<dbReference type="GO" id="GO:0033856">
    <property type="term" value="F:pyridoxine 5'-phosphate synthase activity"/>
    <property type="evidence" value="ECO:0007669"/>
    <property type="project" value="UniProtKB-EC"/>
</dbReference>
<dbReference type="GO" id="GO:0008615">
    <property type="term" value="P:pyridoxine biosynthetic process"/>
    <property type="evidence" value="ECO:0007669"/>
    <property type="project" value="UniProtKB-UniRule"/>
</dbReference>
<dbReference type="CDD" id="cd00003">
    <property type="entry name" value="PNPsynthase"/>
    <property type="match status" value="1"/>
</dbReference>
<dbReference type="Gene3D" id="3.20.20.70">
    <property type="entry name" value="Aldolase class I"/>
    <property type="match status" value="1"/>
</dbReference>
<dbReference type="HAMAP" id="MF_00279">
    <property type="entry name" value="PdxJ"/>
    <property type="match status" value="1"/>
</dbReference>
<dbReference type="InterPro" id="IPR013785">
    <property type="entry name" value="Aldolase_TIM"/>
</dbReference>
<dbReference type="InterPro" id="IPR004569">
    <property type="entry name" value="PyrdxlP_synth_PdxJ"/>
</dbReference>
<dbReference type="InterPro" id="IPR036130">
    <property type="entry name" value="Pyridoxine-5'_phos_synth"/>
</dbReference>
<dbReference type="NCBIfam" id="TIGR00559">
    <property type="entry name" value="pdxJ"/>
    <property type="match status" value="1"/>
</dbReference>
<dbReference type="NCBIfam" id="NF003625">
    <property type="entry name" value="PRK05265.1-3"/>
    <property type="match status" value="1"/>
</dbReference>
<dbReference type="NCBIfam" id="NF003627">
    <property type="entry name" value="PRK05265.1-5"/>
    <property type="match status" value="1"/>
</dbReference>
<dbReference type="PANTHER" id="PTHR30456">
    <property type="entry name" value="PYRIDOXINE 5'-PHOSPHATE SYNTHASE"/>
    <property type="match status" value="1"/>
</dbReference>
<dbReference type="PANTHER" id="PTHR30456:SF0">
    <property type="entry name" value="PYRIDOXINE 5'-PHOSPHATE SYNTHASE"/>
    <property type="match status" value="1"/>
</dbReference>
<dbReference type="Pfam" id="PF03740">
    <property type="entry name" value="PdxJ"/>
    <property type="match status" value="1"/>
</dbReference>
<dbReference type="SUPFAM" id="SSF63892">
    <property type="entry name" value="Pyridoxine 5'-phosphate synthase"/>
    <property type="match status" value="1"/>
</dbReference>
<protein>
    <recommendedName>
        <fullName evidence="1">Pyridoxine 5'-phosphate synthase</fullName>
        <shortName evidence="1">PNP synthase</shortName>
        <ecNumber evidence="1">2.6.99.2</ecNumber>
    </recommendedName>
</protein>
<reference key="1">
    <citation type="journal article" date="2003" name="Nature">
        <title>Genome divergence in two Prochlorococcus ecotypes reflects oceanic niche differentiation.</title>
        <authorList>
            <person name="Rocap G."/>
            <person name="Larimer F.W."/>
            <person name="Lamerdin J.E."/>
            <person name="Malfatti S."/>
            <person name="Chain P."/>
            <person name="Ahlgren N.A."/>
            <person name="Arellano A."/>
            <person name="Coleman M."/>
            <person name="Hauser L."/>
            <person name="Hess W.R."/>
            <person name="Johnson Z.I."/>
            <person name="Land M.L."/>
            <person name="Lindell D."/>
            <person name="Post A.F."/>
            <person name="Regala W."/>
            <person name="Shah M."/>
            <person name="Shaw S.L."/>
            <person name="Steglich C."/>
            <person name="Sullivan M.B."/>
            <person name="Ting C.S."/>
            <person name="Tolonen A."/>
            <person name="Webb E.A."/>
            <person name="Zinser E.R."/>
            <person name="Chisholm S.W."/>
        </authorList>
    </citation>
    <scope>NUCLEOTIDE SEQUENCE [LARGE SCALE GENOMIC DNA]</scope>
    <source>
        <strain>MIT 9313</strain>
    </source>
</reference>
<name>PDXJ_PROMM</name>
<evidence type="ECO:0000255" key="1">
    <source>
        <dbReference type="HAMAP-Rule" id="MF_00279"/>
    </source>
</evidence>
<gene>
    <name evidence="1" type="primary">pdxJ</name>
    <name type="ordered locus">PMT_1091</name>
</gene>
<comment type="function">
    <text evidence="1">Catalyzes the complicated ring closure reaction between the two acyclic compounds 1-deoxy-D-xylulose-5-phosphate (DXP) and 3-amino-2-oxopropyl phosphate (1-amino-acetone-3-phosphate or AAP) to form pyridoxine 5'-phosphate (PNP) and inorganic phosphate.</text>
</comment>
<comment type="catalytic activity">
    <reaction evidence="1">
        <text>3-amino-2-oxopropyl phosphate + 1-deoxy-D-xylulose 5-phosphate = pyridoxine 5'-phosphate + phosphate + 2 H2O + H(+)</text>
        <dbReference type="Rhea" id="RHEA:15265"/>
        <dbReference type="ChEBI" id="CHEBI:15377"/>
        <dbReference type="ChEBI" id="CHEBI:15378"/>
        <dbReference type="ChEBI" id="CHEBI:43474"/>
        <dbReference type="ChEBI" id="CHEBI:57279"/>
        <dbReference type="ChEBI" id="CHEBI:57792"/>
        <dbReference type="ChEBI" id="CHEBI:58589"/>
        <dbReference type="EC" id="2.6.99.2"/>
    </reaction>
</comment>
<comment type="pathway">
    <text evidence="1">Cofactor biosynthesis; pyridoxine 5'-phosphate biosynthesis; pyridoxine 5'-phosphate from D-erythrose 4-phosphate: step 5/5.</text>
</comment>
<comment type="subunit">
    <text evidence="1">Homooctamer; tetramer of dimers.</text>
</comment>
<comment type="subcellular location">
    <subcellularLocation>
        <location evidence="1">Cytoplasm</location>
    </subcellularLocation>
</comment>
<comment type="similarity">
    <text evidence="1">Belongs to the PNP synthase family.</text>
</comment>
<organism>
    <name type="scientific">Prochlorococcus marinus (strain MIT 9313)</name>
    <dbReference type="NCBI Taxonomy" id="74547"/>
    <lineage>
        <taxon>Bacteria</taxon>
        <taxon>Bacillati</taxon>
        <taxon>Cyanobacteriota</taxon>
        <taxon>Cyanophyceae</taxon>
        <taxon>Synechococcales</taxon>
        <taxon>Prochlorococcaceae</taxon>
        <taxon>Prochlorococcus</taxon>
    </lineage>
</organism>
<keyword id="KW-0963">Cytoplasm</keyword>
<keyword id="KW-0664">Pyridoxine biosynthesis</keyword>
<keyword id="KW-1185">Reference proteome</keyword>
<keyword id="KW-0808">Transferase</keyword>
<accession>Q7V6Q5</accession>
<proteinExistence type="inferred from homology"/>